<feature type="chain" id="PRO_1000010135" description="Ribosomal RNA small subunit methyltransferase G">
    <location>
        <begin position="1"/>
        <end position="239"/>
    </location>
</feature>
<feature type="binding site" evidence="1">
    <location>
        <position position="78"/>
    </location>
    <ligand>
        <name>S-adenosyl-L-methionine</name>
        <dbReference type="ChEBI" id="CHEBI:59789"/>
    </ligand>
</feature>
<feature type="binding site" evidence="1">
    <location>
        <position position="83"/>
    </location>
    <ligand>
        <name>S-adenosyl-L-methionine</name>
        <dbReference type="ChEBI" id="CHEBI:59789"/>
    </ligand>
</feature>
<feature type="binding site" evidence="1">
    <location>
        <begin position="129"/>
        <end position="130"/>
    </location>
    <ligand>
        <name>S-adenosyl-L-methionine</name>
        <dbReference type="ChEBI" id="CHEBI:59789"/>
    </ligand>
</feature>
<feature type="binding site" evidence="1">
    <location>
        <position position="148"/>
    </location>
    <ligand>
        <name>S-adenosyl-L-methionine</name>
        <dbReference type="ChEBI" id="CHEBI:59789"/>
    </ligand>
</feature>
<gene>
    <name evidence="1" type="primary">rsmG</name>
    <name type="ordered locus">CLB_3734</name>
</gene>
<name>RSMG_CLOB1</name>
<proteinExistence type="inferred from homology"/>
<reference key="1">
    <citation type="journal article" date="2007" name="PLoS ONE">
        <title>Analysis of the neurotoxin complex genes in Clostridium botulinum A1-A4 and B1 strains: BoNT/A3, /Ba4 and /B1 clusters are located within plasmids.</title>
        <authorList>
            <person name="Smith T.J."/>
            <person name="Hill K.K."/>
            <person name="Foley B.T."/>
            <person name="Detter J.C."/>
            <person name="Munk A.C."/>
            <person name="Bruce D.C."/>
            <person name="Doggett N.A."/>
            <person name="Smith L.A."/>
            <person name="Marks J.D."/>
            <person name="Xie G."/>
            <person name="Brettin T.S."/>
        </authorList>
    </citation>
    <scope>NUCLEOTIDE SEQUENCE [LARGE SCALE GENOMIC DNA]</scope>
    <source>
        <strain>ATCC 19397 / Type A</strain>
    </source>
</reference>
<keyword id="KW-0963">Cytoplasm</keyword>
<keyword id="KW-0489">Methyltransferase</keyword>
<keyword id="KW-0698">rRNA processing</keyword>
<keyword id="KW-0949">S-adenosyl-L-methionine</keyword>
<keyword id="KW-0808">Transferase</keyword>
<comment type="function">
    <text evidence="1">Specifically methylates the N7 position of a guanine in 16S rRNA.</text>
</comment>
<comment type="subcellular location">
    <subcellularLocation>
        <location evidence="1">Cytoplasm</location>
    </subcellularLocation>
</comment>
<comment type="similarity">
    <text evidence="1">Belongs to the methyltransferase superfamily. RNA methyltransferase RsmG family.</text>
</comment>
<sequence>MEFFNILQSACNDVNLDFNDKKYNQLISYKNLIQEWNKKINLTAIVEDDEIIKKHFIDCIKIFKSSPIGEAKSLIDIGTGAGFPGIPIKILKEDIEITLLDSLQKRINFLNTVIGELQLKNIQCLHGRAEDYAQEIQHRQKYDIAVSRAVANLAVLSEFCIPFVEKGGYFIAMKGPSVEEEITAATKSIEILGGKIEDIIKIDIEDTDLKHNLVIIKKVKETGKRYPRKPGIIKKNPLK</sequence>
<protein>
    <recommendedName>
        <fullName evidence="1">Ribosomal RNA small subunit methyltransferase G</fullName>
        <ecNumber evidence="1">2.1.1.-</ecNumber>
    </recommendedName>
    <alternativeName>
        <fullName evidence="1">16S rRNA 7-methylguanosine methyltransferase</fullName>
        <shortName evidence="1">16S rRNA m7G methyltransferase</shortName>
    </alternativeName>
</protein>
<dbReference type="EC" id="2.1.1.-" evidence="1"/>
<dbReference type="EMBL" id="CP000726">
    <property type="protein sequence ID" value="ABS35724.1"/>
    <property type="molecule type" value="Genomic_DNA"/>
</dbReference>
<dbReference type="RefSeq" id="WP_012048453.1">
    <property type="nucleotide sequence ID" value="NC_009697.1"/>
</dbReference>
<dbReference type="SMR" id="A7FPL8"/>
<dbReference type="GeneID" id="5204337"/>
<dbReference type="KEGG" id="cba:CLB_3734"/>
<dbReference type="HOGENOM" id="CLU_065341_0_0_9"/>
<dbReference type="GO" id="GO:0005829">
    <property type="term" value="C:cytosol"/>
    <property type="evidence" value="ECO:0007669"/>
    <property type="project" value="TreeGrafter"/>
</dbReference>
<dbReference type="GO" id="GO:0070043">
    <property type="term" value="F:rRNA (guanine-N7-)-methyltransferase activity"/>
    <property type="evidence" value="ECO:0007669"/>
    <property type="project" value="UniProtKB-UniRule"/>
</dbReference>
<dbReference type="CDD" id="cd02440">
    <property type="entry name" value="AdoMet_MTases"/>
    <property type="match status" value="1"/>
</dbReference>
<dbReference type="FunFam" id="3.40.50.150:FF:000041">
    <property type="entry name" value="Ribosomal RNA small subunit methyltransferase G"/>
    <property type="match status" value="1"/>
</dbReference>
<dbReference type="Gene3D" id="3.40.50.150">
    <property type="entry name" value="Vaccinia Virus protein VP39"/>
    <property type="match status" value="1"/>
</dbReference>
<dbReference type="HAMAP" id="MF_00074">
    <property type="entry name" value="16SrRNA_methyltr_G"/>
    <property type="match status" value="1"/>
</dbReference>
<dbReference type="InterPro" id="IPR003682">
    <property type="entry name" value="rRNA_ssu_MeTfrase_G"/>
</dbReference>
<dbReference type="InterPro" id="IPR029063">
    <property type="entry name" value="SAM-dependent_MTases_sf"/>
</dbReference>
<dbReference type="NCBIfam" id="TIGR00138">
    <property type="entry name" value="rsmG_gidB"/>
    <property type="match status" value="1"/>
</dbReference>
<dbReference type="PANTHER" id="PTHR31760">
    <property type="entry name" value="S-ADENOSYL-L-METHIONINE-DEPENDENT METHYLTRANSFERASES SUPERFAMILY PROTEIN"/>
    <property type="match status" value="1"/>
</dbReference>
<dbReference type="PANTHER" id="PTHR31760:SF0">
    <property type="entry name" value="S-ADENOSYL-L-METHIONINE-DEPENDENT METHYLTRANSFERASES SUPERFAMILY PROTEIN"/>
    <property type="match status" value="1"/>
</dbReference>
<dbReference type="Pfam" id="PF02527">
    <property type="entry name" value="GidB"/>
    <property type="match status" value="1"/>
</dbReference>
<dbReference type="PIRSF" id="PIRSF003078">
    <property type="entry name" value="GidB"/>
    <property type="match status" value="1"/>
</dbReference>
<dbReference type="SUPFAM" id="SSF53335">
    <property type="entry name" value="S-adenosyl-L-methionine-dependent methyltransferases"/>
    <property type="match status" value="1"/>
</dbReference>
<accession>A7FPL8</accession>
<organism>
    <name type="scientific">Clostridium botulinum (strain ATCC 19397 / Type A)</name>
    <dbReference type="NCBI Taxonomy" id="441770"/>
    <lineage>
        <taxon>Bacteria</taxon>
        <taxon>Bacillati</taxon>
        <taxon>Bacillota</taxon>
        <taxon>Clostridia</taxon>
        <taxon>Eubacteriales</taxon>
        <taxon>Clostridiaceae</taxon>
        <taxon>Clostridium</taxon>
    </lineage>
</organism>
<evidence type="ECO:0000255" key="1">
    <source>
        <dbReference type="HAMAP-Rule" id="MF_00074"/>
    </source>
</evidence>